<accession>O66381</accession>
<accession>Q9KD43</accession>
<proteinExistence type="inferred from homology"/>
<comment type="function">
    <text evidence="1">Sigma factors are initiation factors that promote the attachment of RNA polymerase to specific initiation sites and are then released. This sigma factor is the primary sigma factor during exponential growth.</text>
</comment>
<comment type="subunit">
    <text evidence="1">Interacts transiently with the RNA polymerase catalytic core.</text>
</comment>
<comment type="subcellular location">
    <subcellularLocation>
        <location evidence="1">Cytoplasm</location>
    </subcellularLocation>
</comment>
<comment type="similarity">
    <text evidence="1">Belongs to the sigma-70 factor family. RpoD/SigA subfamily.</text>
</comment>
<gene>
    <name evidence="1" type="primary">sigA</name>
    <name type="synonym">rpoD</name>
    <name type="ordered locus">BH1376</name>
</gene>
<keyword id="KW-0963">Cytoplasm</keyword>
<keyword id="KW-0238">DNA-binding</keyword>
<keyword id="KW-1185">Reference proteome</keyword>
<keyword id="KW-0731">Sigma factor</keyword>
<keyword id="KW-0804">Transcription</keyword>
<keyword id="KW-0805">Transcription regulation</keyword>
<evidence type="ECO:0000255" key="1">
    <source>
        <dbReference type="HAMAP-Rule" id="MF_00963"/>
    </source>
</evidence>
<evidence type="ECO:0000305" key="2"/>
<reference key="1">
    <citation type="submission" date="1998-04" db="EMBL/GenBank/DDBJ databases">
        <title>Cloning and expression of the gene encoding major sigma factor (sigA) of alkaliphilic Bacillus sp. strain C-125.</title>
        <authorList>
            <person name="Fuji F."/>
            <person name="Nakasone K."/>
            <person name="Takaki Y."/>
            <person name="Takami H."/>
            <person name="Inoue A."/>
            <person name="Horikoshi K."/>
        </authorList>
    </citation>
    <scope>NUCLEOTIDE SEQUENCE [GENOMIC DNA]</scope>
    <source>
        <strain>ATCC BAA-125 / DSM 18197 / FERM 7344 / JCM 9153 / C-125</strain>
    </source>
</reference>
<reference key="2">
    <citation type="journal article" date="2000" name="Nucleic Acids Res.">
        <title>Complete genome sequence of the alkaliphilic bacterium Bacillus halodurans and genomic sequence comparison with Bacillus subtilis.</title>
        <authorList>
            <person name="Takami H."/>
            <person name="Nakasone K."/>
            <person name="Takaki Y."/>
            <person name="Maeno G."/>
            <person name="Sasaki R."/>
            <person name="Masui N."/>
            <person name="Fuji F."/>
            <person name="Hirama C."/>
            <person name="Nakamura Y."/>
            <person name="Ogasawara N."/>
            <person name="Kuhara S."/>
            <person name="Horikoshi K."/>
        </authorList>
    </citation>
    <scope>NUCLEOTIDE SEQUENCE [LARGE SCALE GENOMIC DNA]</scope>
    <source>
        <strain>ATCC BAA-125 / DSM 18197 / FERM 7344 / JCM 9153 / C-125</strain>
    </source>
</reference>
<organism>
    <name type="scientific">Halalkalibacterium halodurans (strain ATCC BAA-125 / DSM 18197 / FERM 7344 / JCM 9153 / C-125)</name>
    <name type="common">Bacillus halodurans</name>
    <dbReference type="NCBI Taxonomy" id="272558"/>
    <lineage>
        <taxon>Bacteria</taxon>
        <taxon>Bacillati</taxon>
        <taxon>Bacillota</taxon>
        <taxon>Bacilli</taxon>
        <taxon>Bacillales</taxon>
        <taxon>Bacillaceae</taxon>
        <taxon>Halalkalibacterium (ex Joshi et al. 2022)</taxon>
    </lineage>
</organism>
<feature type="chain" id="PRO_0000093873" description="RNA polymerase sigma factor SigA">
    <location>
        <begin position="1"/>
        <end position="372"/>
    </location>
</feature>
<feature type="DNA-binding region" description="H-T-H motif" evidence="1">
    <location>
        <begin position="333"/>
        <end position="352"/>
    </location>
</feature>
<feature type="region of interest" description="Sigma-70 factor domain-2" evidence="1">
    <location>
        <begin position="139"/>
        <end position="209"/>
    </location>
</feature>
<feature type="region of interest" description="Sigma-70 factor domain-3" evidence="1">
    <location>
        <begin position="218"/>
        <end position="294"/>
    </location>
</feature>
<feature type="region of interest" description="Sigma-70 factor domain-4" evidence="1">
    <location>
        <begin position="307"/>
        <end position="360"/>
    </location>
</feature>
<feature type="short sequence motif" description="Interaction with polymerase core subunit RpoC">
    <location>
        <begin position="163"/>
        <end position="166"/>
    </location>
</feature>
<feature type="sequence conflict" description="In Ref. 1; BAA25730." evidence="2" ref="1">
    <original>L</original>
    <variation>V</variation>
    <location>
        <position position="234"/>
    </location>
</feature>
<name>SIGA_HALH5</name>
<sequence>MAEKPLRPLAEGELSIDQVKEQLVELGKKRGVLTYAEITEKLAPYDQDSDQMDEFFEYLGEQGVEILNDNEEVPSLQQVEKEEEEFDLNDLSVPPGVKINDPVRMYLKEIGRVPLLTAEEEIELATRIEQGDEEAKRRLAEANLRLVVSIAKRYVGRGMLFLDLIQEGNMGLIKAVEKFDYNKGFKFSTYATWWIRQAITRAIADQARTIRIPVHMVETINKLIRVQRQLLQDLGREPSPEEVAEEMDLTPEKVREILKIAQEPVSLETPIGEEDDSHLGDFIEDQDALAPSDAAAYELLKEQLEDVLDTLTDREENVLRLRFGLDDGRTRTLEEVGKVFGVTRERIRQIEAKALRKLRHPSRSKRLKDFLE</sequence>
<dbReference type="EMBL" id="AB012852">
    <property type="protein sequence ID" value="BAA25730.1"/>
    <property type="molecule type" value="Genomic_DNA"/>
</dbReference>
<dbReference type="EMBL" id="BA000004">
    <property type="protein sequence ID" value="BAB05095.1"/>
    <property type="molecule type" value="Genomic_DNA"/>
</dbReference>
<dbReference type="PIR" id="H83821">
    <property type="entry name" value="H83821"/>
</dbReference>
<dbReference type="RefSeq" id="WP_010897541.1">
    <property type="nucleotide sequence ID" value="NC_002570.2"/>
</dbReference>
<dbReference type="SMR" id="O66381"/>
<dbReference type="STRING" id="272558.gene:10727270"/>
<dbReference type="GeneID" id="87596996"/>
<dbReference type="KEGG" id="bha:BH1376"/>
<dbReference type="eggNOG" id="COG0568">
    <property type="taxonomic scope" value="Bacteria"/>
</dbReference>
<dbReference type="HOGENOM" id="CLU_014793_3_3_9"/>
<dbReference type="OrthoDB" id="9809557at2"/>
<dbReference type="Proteomes" id="UP000001258">
    <property type="component" value="Chromosome"/>
</dbReference>
<dbReference type="GO" id="GO:0005737">
    <property type="term" value="C:cytoplasm"/>
    <property type="evidence" value="ECO:0007669"/>
    <property type="project" value="UniProtKB-SubCell"/>
</dbReference>
<dbReference type="GO" id="GO:0003677">
    <property type="term" value="F:DNA binding"/>
    <property type="evidence" value="ECO:0007669"/>
    <property type="project" value="UniProtKB-UniRule"/>
</dbReference>
<dbReference type="GO" id="GO:0016987">
    <property type="term" value="F:sigma factor activity"/>
    <property type="evidence" value="ECO:0007669"/>
    <property type="project" value="UniProtKB-UniRule"/>
</dbReference>
<dbReference type="GO" id="GO:0006352">
    <property type="term" value="P:DNA-templated transcription initiation"/>
    <property type="evidence" value="ECO:0007669"/>
    <property type="project" value="UniProtKB-UniRule"/>
</dbReference>
<dbReference type="CDD" id="cd06171">
    <property type="entry name" value="Sigma70_r4"/>
    <property type="match status" value="1"/>
</dbReference>
<dbReference type="FunFam" id="1.10.10.10:FF:000002">
    <property type="entry name" value="RNA polymerase sigma factor SigA"/>
    <property type="match status" value="1"/>
</dbReference>
<dbReference type="FunFam" id="1.10.10.10:FF:000004">
    <property type="entry name" value="RNA polymerase sigma factor SigA"/>
    <property type="match status" value="1"/>
</dbReference>
<dbReference type="FunFam" id="1.10.601.10:FF:000001">
    <property type="entry name" value="RNA polymerase sigma factor SigA"/>
    <property type="match status" value="1"/>
</dbReference>
<dbReference type="Gene3D" id="1.10.601.10">
    <property type="entry name" value="RNA Polymerase Primary Sigma Factor"/>
    <property type="match status" value="2"/>
</dbReference>
<dbReference type="Gene3D" id="1.10.220.120">
    <property type="entry name" value="Sigma-70 factor, region 1.1"/>
    <property type="match status" value="1"/>
</dbReference>
<dbReference type="Gene3D" id="1.10.10.10">
    <property type="entry name" value="Winged helix-like DNA-binding domain superfamily/Winged helix DNA-binding domain"/>
    <property type="match status" value="2"/>
</dbReference>
<dbReference type="HAMAP" id="MF_00963">
    <property type="entry name" value="Sigma70_RpoD_SigA"/>
    <property type="match status" value="1"/>
</dbReference>
<dbReference type="InterPro" id="IPR014284">
    <property type="entry name" value="RNA_pol_sigma-70_dom"/>
</dbReference>
<dbReference type="InterPro" id="IPR000943">
    <property type="entry name" value="RNA_pol_sigma70"/>
</dbReference>
<dbReference type="InterPro" id="IPR009042">
    <property type="entry name" value="RNA_pol_sigma70_r1_2"/>
</dbReference>
<dbReference type="InterPro" id="IPR007627">
    <property type="entry name" value="RNA_pol_sigma70_r2"/>
</dbReference>
<dbReference type="InterPro" id="IPR007624">
    <property type="entry name" value="RNA_pol_sigma70_r3"/>
</dbReference>
<dbReference type="InterPro" id="IPR007630">
    <property type="entry name" value="RNA_pol_sigma70_r4"/>
</dbReference>
<dbReference type="InterPro" id="IPR007127">
    <property type="entry name" value="RNA_pol_sigma_70_r1_1"/>
</dbReference>
<dbReference type="InterPro" id="IPR042189">
    <property type="entry name" value="RNA_pol_sigma_70_r1_1_sf"/>
</dbReference>
<dbReference type="InterPro" id="IPR013325">
    <property type="entry name" value="RNA_pol_sigma_r2"/>
</dbReference>
<dbReference type="InterPro" id="IPR013324">
    <property type="entry name" value="RNA_pol_sigma_r3/r4-like"/>
</dbReference>
<dbReference type="InterPro" id="IPR012760">
    <property type="entry name" value="RNA_pol_sigma_RpoD_C"/>
</dbReference>
<dbReference type="InterPro" id="IPR050239">
    <property type="entry name" value="Sigma-70_RNA_pol_init_factors"/>
</dbReference>
<dbReference type="InterPro" id="IPR028630">
    <property type="entry name" value="Sigma70_RpoD"/>
</dbReference>
<dbReference type="InterPro" id="IPR036388">
    <property type="entry name" value="WH-like_DNA-bd_sf"/>
</dbReference>
<dbReference type="NCBIfam" id="NF006666">
    <property type="entry name" value="PRK09210.1"/>
    <property type="match status" value="1"/>
</dbReference>
<dbReference type="NCBIfam" id="TIGR02393">
    <property type="entry name" value="RpoD_Cterm"/>
    <property type="match status" value="1"/>
</dbReference>
<dbReference type="NCBIfam" id="TIGR02937">
    <property type="entry name" value="sigma70-ECF"/>
    <property type="match status" value="1"/>
</dbReference>
<dbReference type="PANTHER" id="PTHR30603">
    <property type="entry name" value="RNA POLYMERASE SIGMA FACTOR RPO"/>
    <property type="match status" value="1"/>
</dbReference>
<dbReference type="PANTHER" id="PTHR30603:SF60">
    <property type="entry name" value="RNA POLYMERASE SIGMA FACTOR RPOD"/>
    <property type="match status" value="1"/>
</dbReference>
<dbReference type="Pfam" id="PF03979">
    <property type="entry name" value="Sigma70_r1_1"/>
    <property type="match status" value="1"/>
</dbReference>
<dbReference type="Pfam" id="PF00140">
    <property type="entry name" value="Sigma70_r1_2"/>
    <property type="match status" value="1"/>
</dbReference>
<dbReference type="Pfam" id="PF04542">
    <property type="entry name" value="Sigma70_r2"/>
    <property type="match status" value="1"/>
</dbReference>
<dbReference type="Pfam" id="PF04539">
    <property type="entry name" value="Sigma70_r3"/>
    <property type="match status" value="1"/>
</dbReference>
<dbReference type="Pfam" id="PF04545">
    <property type="entry name" value="Sigma70_r4"/>
    <property type="match status" value="1"/>
</dbReference>
<dbReference type="PRINTS" id="PR00046">
    <property type="entry name" value="SIGMA70FCT"/>
</dbReference>
<dbReference type="SUPFAM" id="SSF88946">
    <property type="entry name" value="Sigma2 domain of RNA polymerase sigma factors"/>
    <property type="match status" value="1"/>
</dbReference>
<dbReference type="SUPFAM" id="SSF88659">
    <property type="entry name" value="Sigma3 and sigma4 domains of RNA polymerase sigma factors"/>
    <property type="match status" value="2"/>
</dbReference>
<dbReference type="PROSITE" id="PS00715">
    <property type="entry name" value="SIGMA70_1"/>
    <property type="match status" value="1"/>
</dbReference>
<dbReference type="PROSITE" id="PS00716">
    <property type="entry name" value="SIGMA70_2"/>
    <property type="match status" value="1"/>
</dbReference>
<protein>
    <recommendedName>
        <fullName evidence="1">RNA polymerase sigma factor SigA</fullName>
    </recommendedName>
    <alternativeName>
        <fullName>Sigma-43</fullName>
    </alternativeName>
    <alternativeName>
        <fullName>Sigma-A</fullName>
    </alternativeName>
</protein>